<proteinExistence type="evidence at protein level"/>
<name>MYLK2_HUMAN</name>
<organism>
    <name type="scientific">Homo sapiens</name>
    <name type="common">Human</name>
    <dbReference type="NCBI Taxonomy" id="9606"/>
    <lineage>
        <taxon>Eukaryota</taxon>
        <taxon>Metazoa</taxon>
        <taxon>Chordata</taxon>
        <taxon>Craniata</taxon>
        <taxon>Vertebrata</taxon>
        <taxon>Euteleostomi</taxon>
        <taxon>Mammalia</taxon>
        <taxon>Eutheria</taxon>
        <taxon>Euarchontoglires</taxon>
        <taxon>Primates</taxon>
        <taxon>Haplorrhini</taxon>
        <taxon>Catarrhini</taxon>
        <taxon>Hominidae</taxon>
        <taxon>Homo</taxon>
    </lineage>
</organism>
<evidence type="ECO:0000250" key="1"/>
<evidence type="ECO:0000250" key="2">
    <source>
        <dbReference type="UniProtKB" id="P07313"/>
    </source>
</evidence>
<evidence type="ECO:0000250" key="3">
    <source>
        <dbReference type="UniProtKB" id="P20689"/>
    </source>
</evidence>
<evidence type="ECO:0000250" key="4">
    <source>
        <dbReference type="UniProtKB" id="Q8VCR8"/>
    </source>
</evidence>
<evidence type="ECO:0000255" key="5">
    <source>
        <dbReference type="PROSITE-ProRule" id="PRU00159"/>
    </source>
</evidence>
<evidence type="ECO:0000255" key="6">
    <source>
        <dbReference type="PROSITE-ProRule" id="PRU10027"/>
    </source>
</evidence>
<evidence type="ECO:0000256" key="7">
    <source>
        <dbReference type="SAM" id="MobiDB-lite"/>
    </source>
</evidence>
<evidence type="ECO:0000269" key="8">
    <source>
    </source>
</evidence>
<evidence type="ECO:0000269" key="9">
    <source>
    </source>
</evidence>
<evidence type="ECO:0000269" key="10">
    <source ref="5"/>
</evidence>
<evidence type="ECO:0000305" key="11"/>
<evidence type="ECO:0007829" key="12">
    <source>
        <dbReference type="PDB" id="3KF9"/>
    </source>
</evidence>
<protein>
    <recommendedName>
        <fullName>Myosin light chain kinase 2, skeletal/cardiac muscle</fullName>
        <shortName>MLCK2</shortName>
        <ecNumber>2.7.11.18</ecNumber>
    </recommendedName>
</protein>
<sequence>MATENGAVELGIQNPSTDKAPKGPTGERPLAAGKDPGPPDPKKAPDPPTLKKDAKAPASEKGDGTLAQPSTSSQGPKGEGDRGGGPAEGSAGPPAALPQQTATPETSVKKPKAEQGASGSQDPGKPRVGKKAAEGQAAARRGSPAFLHSPSCPAIISSSEKLLAKKPPSEASELTFEGVPMTHSPTDPRPAKAEEGKNILAESQKEVGEKTPGQAGQAKMQGDTSRGIEFQAVPSEKSEVGQALCLTAREEDCFQILDDCPPPPAPFPHRMVELRTGNVSSEFSMNSKEALGGGKFGAVCTCMEKATGLKLAAKVIKKQTPKDKEMVLLEIEVMNQLNHRNLIQLYAAIETPHEIVLFMEYIEGGELFERIVDEDYHLTEVDTMVFVRQICDGILFMHKMRVLHLDLKPENILCVNTTGHLVKIIDFGLARRYNPNEKLKVNFGTPEFLSPEVVNYDQISDKTDMWSMGVITYMLLSGLSPFLGDDDTETLNNVLSGNWYFDEETFEAVSDEAKDFVSNLIVKDQRARMNAAQCLAHPWLNNLAEKAKRCNRRLKSQILLKKYLMKRRWKKNFIAVSAANRFKKISSSGALMALGV</sequence>
<reference key="1">
    <citation type="journal article" date="2001" name="Cell">
        <title>The overall pattern of cardiac contraction depends on a spatial gradient of myosin regulatory light chain phosphorylation.</title>
        <authorList>
            <person name="Davis J.S."/>
            <person name="Hassanzadeh S."/>
            <person name="Winitsky S."/>
            <person name="Lin H."/>
            <person name="Satorius C."/>
            <person name="Vemuri R."/>
            <person name="Aletras A.H."/>
            <person name="Wen H."/>
            <person name="Epstein N.D."/>
        </authorList>
    </citation>
    <scope>NUCLEOTIDE SEQUENCE [MRNA]</scope>
    <scope>FUNCTION</scope>
    <scope>VARIANTS CMH VAL-87 AND GLU-95</scope>
    <source>
        <tissue>Skeletal muscle</tissue>
    </source>
</reference>
<reference key="2">
    <citation type="submission" date="2000-02" db="EMBL/GenBank/DDBJ databases">
        <title>Full-length sequencing of 100 cDNA clones from human adult skeletal muscle.</title>
        <authorList>
            <person name="Stanchi F."/>
            <person name="Lanfranchi G."/>
        </authorList>
    </citation>
    <scope>NUCLEOTIDE SEQUENCE [MRNA]</scope>
    <source>
        <tissue>Skeletal muscle</tissue>
    </source>
</reference>
<reference key="3">
    <citation type="journal article" date="2001" name="Nature">
        <title>The DNA sequence and comparative analysis of human chromosome 20.</title>
        <authorList>
            <person name="Deloukas P."/>
            <person name="Matthews L.H."/>
            <person name="Ashurst J.L."/>
            <person name="Burton J."/>
            <person name="Gilbert J.G.R."/>
            <person name="Jones M."/>
            <person name="Stavrides G."/>
            <person name="Almeida J.P."/>
            <person name="Babbage A.K."/>
            <person name="Bagguley C.L."/>
            <person name="Bailey J."/>
            <person name="Barlow K.F."/>
            <person name="Bates K.N."/>
            <person name="Beard L.M."/>
            <person name="Beare D.M."/>
            <person name="Beasley O.P."/>
            <person name="Bird C.P."/>
            <person name="Blakey S.E."/>
            <person name="Bridgeman A.M."/>
            <person name="Brown A.J."/>
            <person name="Buck D."/>
            <person name="Burrill W.D."/>
            <person name="Butler A.P."/>
            <person name="Carder C."/>
            <person name="Carter N.P."/>
            <person name="Chapman J.C."/>
            <person name="Clamp M."/>
            <person name="Clark G."/>
            <person name="Clark L.N."/>
            <person name="Clark S.Y."/>
            <person name="Clee C.M."/>
            <person name="Clegg S."/>
            <person name="Cobley V.E."/>
            <person name="Collier R.E."/>
            <person name="Connor R.E."/>
            <person name="Corby N.R."/>
            <person name="Coulson A."/>
            <person name="Coville G.J."/>
            <person name="Deadman R."/>
            <person name="Dhami P.D."/>
            <person name="Dunn M."/>
            <person name="Ellington A.G."/>
            <person name="Frankland J.A."/>
            <person name="Fraser A."/>
            <person name="French L."/>
            <person name="Garner P."/>
            <person name="Grafham D.V."/>
            <person name="Griffiths C."/>
            <person name="Griffiths M.N.D."/>
            <person name="Gwilliam R."/>
            <person name="Hall R.E."/>
            <person name="Hammond S."/>
            <person name="Harley J.L."/>
            <person name="Heath P.D."/>
            <person name="Ho S."/>
            <person name="Holden J.L."/>
            <person name="Howden P.J."/>
            <person name="Huckle E."/>
            <person name="Hunt A.R."/>
            <person name="Hunt S.E."/>
            <person name="Jekosch K."/>
            <person name="Johnson C.M."/>
            <person name="Johnson D."/>
            <person name="Kay M.P."/>
            <person name="Kimberley A.M."/>
            <person name="King A."/>
            <person name="Knights A."/>
            <person name="Laird G.K."/>
            <person name="Lawlor S."/>
            <person name="Lehvaeslaiho M.H."/>
            <person name="Leversha M.A."/>
            <person name="Lloyd C."/>
            <person name="Lloyd D.M."/>
            <person name="Lovell J.D."/>
            <person name="Marsh V.L."/>
            <person name="Martin S.L."/>
            <person name="McConnachie L.J."/>
            <person name="McLay K."/>
            <person name="McMurray A.A."/>
            <person name="Milne S.A."/>
            <person name="Mistry D."/>
            <person name="Moore M.J.F."/>
            <person name="Mullikin J.C."/>
            <person name="Nickerson T."/>
            <person name="Oliver K."/>
            <person name="Parker A."/>
            <person name="Patel R."/>
            <person name="Pearce T.A.V."/>
            <person name="Peck A.I."/>
            <person name="Phillimore B.J.C.T."/>
            <person name="Prathalingam S.R."/>
            <person name="Plumb R.W."/>
            <person name="Ramsay H."/>
            <person name="Rice C.M."/>
            <person name="Ross M.T."/>
            <person name="Scott C.E."/>
            <person name="Sehra H.K."/>
            <person name="Shownkeen R."/>
            <person name="Sims S."/>
            <person name="Skuce C.D."/>
            <person name="Smith M.L."/>
            <person name="Soderlund C."/>
            <person name="Steward C.A."/>
            <person name="Sulston J.E."/>
            <person name="Swann R.M."/>
            <person name="Sycamore N."/>
            <person name="Taylor R."/>
            <person name="Tee L."/>
            <person name="Thomas D.W."/>
            <person name="Thorpe A."/>
            <person name="Tracey A."/>
            <person name="Tromans A.C."/>
            <person name="Vaudin M."/>
            <person name="Wall M."/>
            <person name="Wallis J.M."/>
            <person name="Whitehead S.L."/>
            <person name="Whittaker P."/>
            <person name="Willey D.L."/>
            <person name="Williams L."/>
            <person name="Williams S.A."/>
            <person name="Wilming L."/>
            <person name="Wray P.W."/>
            <person name="Hubbard T."/>
            <person name="Durbin R.M."/>
            <person name="Bentley D.R."/>
            <person name="Beck S."/>
            <person name="Rogers J."/>
        </authorList>
    </citation>
    <scope>NUCLEOTIDE SEQUENCE [LARGE SCALE GENOMIC DNA]</scope>
</reference>
<reference key="4">
    <citation type="journal article" date="2004" name="Genome Res.">
        <title>The status, quality, and expansion of the NIH full-length cDNA project: the Mammalian Gene Collection (MGC).</title>
        <authorList>
            <consortium name="The MGC Project Team"/>
        </authorList>
    </citation>
    <scope>NUCLEOTIDE SEQUENCE [LARGE SCALE MRNA]</scope>
    <source>
        <tissue>Muscle</tissue>
    </source>
</reference>
<reference key="5">
    <citation type="submission" date="2011-01" db="PDB data bank">
        <title>Structural features of the complexes formed by Scherffelia dubia centrin.</title>
        <authorList>
            <person name="Radu L."/>
            <person name="Miron S."/>
            <person name="Durand D."/>
            <person name="Assairi L."/>
            <person name="Blouquit Y."/>
            <person name="Charbonnier J.B."/>
        </authorList>
    </citation>
    <scope>X-RAY CRYSTALLOGRAPHY (2.6 ANGSTROMS) OF 566-587 IN COMPLEX WITH CENTRIN</scope>
    <scope>SUBUNIT</scope>
</reference>
<reference key="6">
    <citation type="journal article" date="2007" name="Nature">
        <title>Patterns of somatic mutation in human cancer genomes.</title>
        <authorList>
            <person name="Greenman C."/>
            <person name="Stephens P."/>
            <person name="Smith R."/>
            <person name="Dalgliesh G.L."/>
            <person name="Hunter C."/>
            <person name="Bignell G."/>
            <person name="Davies H."/>
            <person name="Teague J."/>
            <person name="Butler A."/>
            <person name="Stevens C."/>
            <person name="Edkins S."/>
            <person name="O'Meara S."/>
            <person name="Vastrik I."/>
            <person name="Schmidt E.E."/>
            <person name="Avis T."/>
            <person name="Barthorpe S."/>
            <person name="Bhamra G."/>
            <person name="Buck G."/>
            <person name="Choudhury B."/>
            <person name="Clements J."/>
            <person name="Cole J."/>
            <person name="Dicks E."/>
            <person name="Forbes S."/>
            <person name="Gray K."/>
            <person name="Halliday K."/>
            <person name="Harrison R."/>
            <person name="Hills K."/>
            <person name="Hinton J."/>
            <person name="Jenkinson A."/>
            <person name="Jones D."/>
            <person name="Menzies A."/>
            <person name="Mironenko T."/>
            <person name="Perry J."/>
            <person name="Raine K."/>
            <person name="Richardson D."/>
            <person name="Shepherd R."/>
            <person name="Small A."/>
            <person name="Tofts C."/>
            <person name="Varian J."/>
            <person name="Webb T."/>
            <person name="West S."/>
            <person name="Widaa S."/>
            <person name="Yates A."/>
            <person name="Cahill D.P."/>
            <person name="Louis D.N."/>
            <person name="Goldstraw P."/>
            <person name="Nicholson A.G."/>
            <person name="Brasseur F."/>
            <person name="Looijenga L."/>
            <person name="Weber B.L."/>
            <person name="Chiew Y.-E."/>
            <person name="DeFazio A."/>
            <person name="Greaves M.F."/>
            <person name="Green A.R."/>
            <person name="Campbell P."/>
            <person name="Birney E."/>
            <person name="Easton D.F."/>
            <person name="Chenevix-Trench G."/>
            <person name="Tan M.-H."/>
            <person name="Khoo S.K."/>
            <person name="Teh B.T."/>
            <person name="Yuen S.T."/>
            <person name="Leung S.Y."/>
            <person name="Wooster R."/>
            <person name="Futreal P.A."/>
            <person name="Stratton M.R."/>
        </authorList>
    </citation>
    <scope>VARIANTS [LARGE SCALE ANALYSIS] VAL-117; VAL-142; ALA-144 AND ASN-324</scope>
</reference>
<gene>
    <name type="primary">MYLK2</name>
</gene>
<dbReference type="EC" id="2.7.11.18"/>
<dbReference type="EMBL" id="AF325549">
    <property type="protein sequence ID" value="AAK15494.1"/>
    <property type="molecule type" value="mRNA"/>
</dbReference>
<dbReference type="EMBL" id="AJ272502">
    <property type="protein sequence ID" value="CAC81354.1"/>
    <property type="molecule type" value="mRNA"/>
</dbReference>
<dbReference type="EMBL" id="AL160175">
    <property type="status" value="NOT_ANNOTATED_CDS"/>
    <property type="molecule type" value="Genomic_DNA"/>
</dbReference>
<dbReference type="EMBL" id="BC007753">
    <property type="protein sequence ID" value="AAH07753.1"/>
    <property type="molecule type" value="mRNA"/>
</dbReference>
<dbReference type="EMBL" id="BC069627">
    <property type="protein sequence ID" value="AAH69627.1"/>
    <property type="molecule type" value="mRNA"/>
</dbReference>
<dbReference type="EMBL" id="BC092413">
    <property type="protein sequence ID" value="AAH92413.1"/>
    <property type="molecule type" value="mRNA"/>
</dbReference>
<dbReference type="EMBL" id="BC127622">
    <property type="protein sequence ID" value="AAI27623.1"/>
    <property type="molecule type" value="mRNA"/>
</dbReference>
<dbReference type="CCDS" id="CCDS13191.1"/>
<dbReference type="RefSeq" id="NP_149109.1">
    <property type="nucleotide sequence ID" value="NM_033118.4"/>
</dbReference>
<dbReference type="PDB" id="2LV6">
    <property type="method" value="Other"/>
    <property type="chains" value="B=566-591"/>
</dbReference>
<dbReference type="PDB" id="3KF9">
    <property type="method" value="X-ray"/>
    <property type="resolution" value="2.60 A"/>
    <property type="chains" value="B/D=566-587"/>
</dbReference>
<dbReference type="PDBsum" id="2LV6"/>
<dbReference type="PDBsum" id="3KF9"/>
<dbReference type="BMRB" id="Q9H1R3"/>
<dbReference type="SMR" id="Q9H1R3"/>
<dbReference type="BioGRID" id="124494">
    <property type="interactions" value="102"/>
</dbReference>
<dbReference type="FunCoup" id="Q9H1R3">
    <property type="interactions" value="1396"/>
</dbReference>
<dbReference type="IntAct" id="Q9H1R3">
    <property type="interactions" value="92"/>
</dbReference>
<dbReference type="MINT" id="Q9H1R3"/>
<dbReference type="STRING" id="9606.ENSP00000365162"/>
<dbReference type="BindingDB" id="Q9H1R3"/>
<dbReference type="ChEMBL" id="CHEMBL2777"/>
<dbReference type="DrugBank" id="DB12010">
    <property type="generic name" value="Fostamatinib"/>
</dbReference>
<dbReference type="DrugBank" id="DB04825">
    <property type="generic name" value="Prenylamine"/>
</dbReference>
<dbReference type="DrugCentral" id="Q9H1R3"/>
<dbReference type="GuidetoPHARMACOLOGY" id="1553"/>
<dbReference type="GlyGen" id="Q9H1R3">
    <property type="glycosylation" value="1 site"/>
</dbReference>
<dbReference type="iPTMnet" id="Q9H1R3"/>
<dbReference type="PhosphoSitePlus" id="Q9H1R3"/>
<dbReference type="BioMuta" id="MYLK2"/>
<dbReference type="DMDM" id="24211884"/>
<dbReference type="jPOST" id="Q9H1R3"/>
<dbReference type="MassIVE" id="Q9H1R3"/>
<dbReference type="PaxDb" id="9606-ENSP00000365162"/>
<dbReference type="PeptideAtlas" id="Q9H1R3"/>
<dbReference type="ProteomicsDB" id="80445"/>
<dbReference type="Antibodypedia" id="25246">
    <property type="antibodies" value="151 antibodies from 26 providers"/>
</dbReference>
<dbReference type="DNASU" id="85366"/>
<dbReference type="Ensembl" id="ENST00000375985.5">
    <property type="protein sequence ID" value="ENSP00000365152.4"/>
    <property type="gene ID" value="ENSG00000101306.11"/>
</dbReference>
<dbReference type="Ensembl" id="ENST00000375994.6">
    <property type="protein sequence ID" value="ENSP00000365162.2"/>
    <property type="gene ID" value="ENSG00000101306.11"/>
</dbReference>
<dbReference type="GeneID" id="85366"/>
<dbReference type="KEGG" id="hsa:85366"/>
<dbReference type="MANE-Select" id="ENST00000375985.5">
    <property type="protein sequence ID" value="ENSP00000365152.4"/>
    <property type="RefSeq nucleotide sequence ID" value="NM_033118.4"/>
    <property type="RefSeq protein sequence ID" value="NP_149109.1"/>
</dbReference>
<dbReference type="UCSC" id="uc002wwq.3">
    <property type="organism name" value="human"/>
</dbReference>
<dbReference type="AGR" id="HGNC:16243"/>
<dbReference type="CTD" id="85366"/>
<dbReference type="DisGeNET" id="85366"/>
<dbReference type="GeneCards" id="MYLK2"/>
<dbReference type="HGNC" id="HGNC:16243">
    <property type="gene designation" value="MYLK2"/>
</dbReference>
<dbReference type="HPA" id="ENSG00000101306">
    <property type="expression patterns" value="Tissue enriched (skeletal)"/>
</dbReference>
<dbReference type="MalaCards" id="MYLK2"/>
<dbReference type="MIM" id="192600">
    <property type="type" value="phenotype"/>
</dbReference>
<dbReference type="MIM" id="606566">
    <property type="type" value="gene"/>
</dbReference>
<dbReference type="neXtProt" id="NX_Q9H1R3"/>
<dbReference type="OpenTargets" id="ENSG00000101306"/>
<dbReference type="PharmGKB" id="PA31389"/>
<dbReference type="VEuPathDB" id="HostDB:ENSG00000101306"/>
<dbReference type="eggNOG" id="KOG0032">
    <property type="taxonomic scope" value="Eukaryota"/>
</dbReference>
<dbReference type="GeneTree" id="ENSGT00940000161489"/>
<dbReference type="HOGENOM" id="CLU_000288_90_1_1"/>
<dbReference type="InParanoid" id="Q9H1R3"/>
<dbReference type="OMA" id="VVMAVWF"/>
<dbReference type="OrthoDB" id="6070751at2759"/>
<dbReference type="PAN-GO" id="Q9H1R3">
    <property type="GO annotations" value="5 GO annotations based on evolutionary models"/>
</dbReference>
<dbReference type="PhylomeDB" id="Q9H1R3"/>
<dbReference type="TreeFam" id="TF314166"/>
<dbReference type="BRENDA" id="2.7.11.18">
    <property type="organism ID" value="2681"/>
</dbReference>
<dbReference type="PathwayCommons" id="Q9H1R3"/>
<dbReference type="SignaLink" id="Q9H1R3"/>
<dbReference type="SIGNOR" id="Q9H1R3"/>
<dbReference type="BioGRID-ORCS" id="85366">
    <property type="hits" value="15 hits in 1181 CRISPR screens"/>
</dbReference>
<dbReference type="EvolutionaryTrace" id="Q9H1R3"/>
<dbReference type="GeneWiki" id="MYLK2"/>
<dbReference type="GenomeRNAi" id="85366"/>
<dbReference type="Pharos" id="Q9H1R3">
    <property type="development level" value="Tchem"/>
</dbReference>
<dbReference type="PRO" id="PR:Q9H1R3"/>
<dbReference type="Proteomes" id="UP000005640">
    <property type="component" value="Chromosome 20"/>
</dbReference>
<dbReference type="RNAct" id="Q9H1R3">
    <property type="molecule type" value="protein"/>
</dbReference>
<dbReference type="Bgee" id="ENSG00000101306">
    <property type="expression patterns" value="Expressed in hindlimb stylopod muscle and 120 other cell types or tissues"/>
</dbReference>
<dbReference type="GO" id="GO:0005737">
    <property type="term" value="C:cytoplasm"/>
    <property type="evidence" value="ECO:0000314"/>
    <property type="project" value="UniProtKB"/>
</dbReference>
<dbReference type="GO" id="GO:0005634">
    <property type="term" value="C:nucleus"/>
    <property type="evidence" value="ECO:0000314"/>
    <property type="project" value="UniProtKB"/>
</dbReference>
<dbReference type="GO" id="GO:0030017">
    <property type="term" value="C:sarcomere"/>
    <property type="evidence" value="ECO:0000305"/>
    <property type="project" value="BHF-UCL"/>
</dbReference>
<dbReference type="GO" id="GO:0045202">
    <property type="term" value="C:synapse"/>
    <property type="evidence" value="ECO:0007669"/>
    <property type="project" value="GOC"/>
</dbReference>
<dbReference type="GO" id="GO:0005524">
    <property type="term" value="F:ATP binding"/>
    <property type="evidence" value="ECO:0007669"/>
    <property type="project" value="UniProtKB-KW"/>
</dbReference>
<dbReference type="GO" id="GO:0004683">
    <property type="term" value="F:calcium/calmodulin-dependent protein kinase activity"/>
    <property type="evidence" value="ECO:0000250"/>
    <property type="project" value="BHF-UCL"/>
</dbReference>
<dbReference type="GO" id="GO:0005516">
    <property type="term" value="F:calmodulin binding"/>
    <property type="evidence" value="ECO:0000250"/>
    <property type="project" value="BHF-UCL"/>
</dbReference>
<dbReference type="GO" id="GO:0032027">
    <property type="term" value="F:myosin light chain binding"/>
    <property type="evidence" value="ECO:0000318"/>
    <property type="project" value="GO_Central"/>
</dbReference>
<dbReference type="GO" id="GO:0004687">
    <property type="term" value="F:myosin light chain kinase activity"/>
    <property type="evidence" value="ECO:0000314"/>
    <property type="project" value="BHF-UCL"/>
</dbReference>
<dbReference type="GO" id="GO:0060048">
    <property type="term" value="P:cardiac muscle contraction"/>
    <property type="evidence" value="ECO:0000305"/>
    <property type="project" value="BHF-UCL"/>
</dbReference>
<dbReference type="GO" id="GO:0055008">
    <property type="term" value="P:cardiac muscle tissue morphogenesis"/>
    <property type="evidence" value="ECO:0000315"/>
    <property type="project" value="BHF-UCL"/>
</dbReference>
<dbReference type="GO" id="GO:0007274">
    <property type="term" value="P:neuromuscular synaptic transmission"/>
    <property type="evidence" value="ECO:0007669"/>
    <property type="project" value="Ensembl"/>
</dbReference>
<dbReference type="GO" id="GO:0018107">
    <property type="term" value="P:peptidyl-threonine phosphorylation"/>
    <property type="evidence" value="ECO:0000314"/>
    <property type="project" value="UniProtKB"/>
</dbReference>
<dbReference type="GO" id="GO:0010628">
    <property type="term" value="P:positive regulation of gene expression"/>
    <property type="evidence" value="ECO:0000314"/>
    <property type="project" value="UniProtKB"/>
</dbReference>
<dbReference type="GO" id="GO:0046777">
    <property type="term" value="P:protein autophosphorylation"/>
    <property type="evidence" value="ECO:0000314"/>
    <property type="project" value="UniProtKB"/>
</dbReference>
<dbReference type="GO" id="GO:0032971">
    <property type="term" value="P:regulation of muscle filament sliding"/>
    <property type="evidence" value="ECO:0000314"/>
    <property type="project" value="BHF-UCL"/>
</dbReference>
<dbReference type="GO" id="GO:0007165">
    <property type="term" value="P:signal transduction"/>
    <property type="evidence" value="ECO:0000318"/>
    <property type="project" value="GO_Central"/>
</dbReference>
<dbReference type="GO" id="GO:0035914">
    <property type="term" value="P:skeletal muscle cell differentiation"/>
    <property type="evidence" value="ECO:0000314"/>
    <property type="project" value="UniProtKB"/>
</dbReference>
<dbReference type="GO" id="GO:0014816">
    <property type="term" value="P:skeletal muscle satellite cell differentiation"/>
    <property type="evidence" value="ECO:0007669"/>
    <property type="project" value="Ensembl"/>
</dbReference>
<dbReference type="GO" id="GO:0006941">
    <property type="term" value="P:striated muscle contraction"/>
    <property type="evidence" value="ECO:0000314"/>
    <property type="project" value="BHF-UCL"/>
</dbReference>
<dbReference type="CDD" id="cd14190">
    <property type="entry name" value="STKc_MLCK2"/>
    <property type="match status" value="1"/>
</dbReference>
<dbReference type="FunFam" id="3.30.200.20:FF:000359">
    <property type="entry name" value="myosin light chain kinase 2, skeletal/cardiac muscle"/>
    <property type="match status" value="1"/>
</dbReference>
<dbReference type="FunFam" id="1.10.510.10:FF:000135">
    <property type="entry name" value="Putative myosin light chain kinase 3"/>
    <property type="match status" value="1"/>
</dbReference>
<dbReference type="Gene3D" id="3.30.200.20">
    <property type="entry name" value="Phosphorylase Kinase, domain 1"/>
    <property type="match status" value="1"/>
</dbReference>
<dbReference type="Gene3D" id="1.10.510.10">
    <property type="entry name" value="Transferase(Phosphotransferase) domain 1"/>
    <property type="match status" value="1"/>
</dbReference>
<dbReference type="InterPro" id="IPR011009">
    <property type="entry name" value="Kinase-like_dom_sf"/>
</dbReference>
<dbReference type="InterPro" id="IPR042717">
    <property type="entry name" value="MLCK2_STKc"/>
</dbReference>
<dbReference type="InterPro" id="IPR000719">
    <property type="entry name" value="Prot_kinase_dom"/>
</dbReference>
<dbReference type="InterPro" id="IPR017441">
    <property type="entry name" value="Protein_kinase_ATP_BS"/>
</dbReference>
<dbReference type="InterPro" id="IPR008271">
    <property type="entry name" value="Ser/Thr_kinase_AS"/>
</dbReference>
<dbReference type="PANTHER" id="PTHR24347">
    <property type="entry name" value="SERINE/THREONINE-PROTEIN KINASE"/>
    <property type="match status" value="1"/>
</dbReference>
<dbReference type="Pfam" id="PF00069">
    <property type="entry name" value="Pkinase"/>
    <property type="match status" value="1"/>
</dbReference>
<dbReference type="SMART" id="SM00220">
    <property type="entry name" value="S_TKc"/>
    <property type="match status" value="1"/>
</dbReference>
<dbReference type="SUPFAM" id="SSF56112">
    <property type="entry name" value="Protein kinase-like (PK-like)"/>
    <property type="match status" value="1"/>
</dbReference>
<dbReference type="PROSITE" id="PS00107">
    <property type="entry name" value="PROTEIN_KINASE_ATP"/>
    <property type="match status" value="1"/>
</dbReference>
<dbReference type="PROSITE" id="PS50011">
    <property type="entry name" value="PROTEIN_KINASE_DOM"/>
    <property type="match status" value="1"/>
</dbReference>
<dbReference type="PROSITE" id="PS00108">
    <property type="entry name" value="PROTEIN_KINASE_ST"/>
    <property type="match status" value="1"/>
</dbReference>
<comment type="function">
    <text evidence="8">Implicated in the level of global muscle contraction and cardiac function. Phosphorylates a specific serine in the N-terminus of a myosin light chain.</text>
</comment>
<comment type="catalytic activity">
    <reaction>
        <text>L-seryl-[myosin light chain] + ATP = O-phospho-L-seryl-[myosin light chain] + ADP + H(+)</text>
        <dbReference type="Rhea" id="RHEA:22004"/>
        <dbReference type="Rhea" id="RHEA-COMP:13684"/>
        <dbReference type="Rhea" id="RHEA-COMP:13685"/>
        <dbReference type="ChEBI" id="CHEBI:15378"/>
        <dbReference type="ChEBI" id="CHEBI:29999"/>
        <dbReference type="ChEBI" id="CHEBI:30616"/>
        <dbReference type="ChEBI" id="CHEBI:83421"/>
        <dbReference type="ChEBI" id="CHEBI:456216"/>
        <dbReference type="EC" id="2.7.11.18"/>
    </reaction>
</comment>
<comment type="catalytic activity">
    <reaction>
        <text>L-threonyl-[myosin light chain] + ATP = O-phospho-L-threonyl-[myosin light chain] + ADP + H(+)</text>
        <dbReference type="Rhea" id="RHEA:53900"/>
        <dbReference type="Rhea" id="RHEA-COMP:13686"/>
        <dbReference type="Rhea" id="RHEA-COMP:13687"/>
        <dbReference type="ChEBI" id="CHEBI:15378"/>
        <dbReference type="ChEBI" id="CHEBI:30013"/>
        <dbReference type="ChEBI" id="CHEBI:30616"/>
        <dbReference type="ChEBI" id="CHEBI:61977"/>
        <dbReference type="ChEBI" id="CHEBI:456216"/>
        <dbReference type="EC" id="2.7.11.18"/>
    </reaction>
</comment>
<comment type="subunit">
    <text evidence="10">May interact with centrin.</text>
</comment>
<comment type="interaction">
    <interactant intactId="EBI-356910">
        <id>Q9H1R3</id>
    </interactant>
    <interactant intactId="EBI-352572">
        <id>P08238</id>
        <label>HSP90AB1</label>
    </interactant>
    <organismsDiffer>false</organismsDiffer>
    <experiments>3</experiments>
</comment>
<comment type="interaction">
    <interactant intactId="EBI-356910">
        <id>Q9H1R3</id>
    </interactant>
    <interactant intactId="EBI-2684075">
        <id>Q06413</id>
        <label>MEF2C</label>
    </interactant>
    <organismsDiffer>false</organismsDiffer>
    <experiments>2</experiments>
</comment>
<comment type="interaction">
    <interactant intactId="EBI-356910">
        <id>Q9H1R3</id>
    </interactant>
    <interactant intactId="EBI-3914460">
        <id>Q9H3J6</id>
        <label>MTRFR</label>
    </interactant>
    <organismsDiffer>false</organismsDiffer>
    <experiments>2</experiments>
</comment>
<comment type="interaction">
    <interactant intactId="EBI-356910">
        <id>Q9H1R3</id>
    </interactant>
    <interactant intactId="EBI-11908005">
        <id>Q9H4I9</id>
        <label>SMDT1</label>
    </interactant>
    <organismsDiffer>false</organismsDiffer>
    <experiments>2</experiments>
</comment>
<comment type="interaction">
    <interactant intactId="EBI-356910">
        <id>Q9H1R3</id>
    </interactant>
    <interactant intactId="EBI-2130429">
        <id>Q9BYV2</id>
        <label>TRIM54</label>
    </interactant>
    <organismsDiffer>false</organismsDiffer>
    <experiments>2</experiments>
</comment>
<comment type="interaction">
    <interactant intactId="EBI-356910">
        <id>Q9H1R3</id>
    </interactant>
    <interactant intactId="EBI-720609">
        <id>O76024</id>
        <label>WFS1</label>
    </interactant>
    <organismsDiffer>false</organismsDiffer>
    <experiments>3</experiments>
</comment>
<comment type="interaction">
    <interactant intactId="EBI-356910">
        <id>Q9H1R3</id>
    </interactant>
    <interactant intactId="EBI-356498">
        <id>P62258</id>
        <label>YWHAE</label>
    </interactant>
    <organismsDiffer>false</organismsDiffer>
    <experiments>2</experiments>
</comment>
<comment type="subcellular location">
    <subcellularLocation>
        <location>Cytoplasm</location>
    </subcellularLocation>
    <text>Colocalizes with phosphorylated myosin light chain (RLCP) at filaments of the myofibrils.</text>
</comment>
<comment type="tissue specificity">
    <text>Heart and skeletal muscles. Increased expression in the apical tissue compared to the interventricular septal tissue.</text>
</comment>
<comment type="disease" evidence="8">
    <disease id="DI-00232">
        <name>Cardiomyopathy, familial hypertrophic</name>
        <acronym>CMH</acronym>
        <description>A hereditary heart disorder characterized by ventricular hypertrophy, which is usually asymmetric and often involves the interventricular septum. The symptoms include dyspnea, syncope, collapse, palpitations, and chest pain. They can be readily provoked by exercise. The disorder has inter- and intrafamilial variability ranging from benign to malignant forms with high risk of cardiac failure and sudden cardiac death.</description>
        <dbReference type="MIM" id="192600"/>
    </disease>
    <text>The disease is caused by variants affecting the gene represented in this entry.</text>
</comment>
<comment type="similarity">
    <text evidence="11">Belongs to the protein kinase superfamily. CAMK Ser/Thr protein kinase family.</text>
</comment>
<accession>Q9H1R3</accession>
<accession>Q569L1</accession>
<accession>Q96I84</accession>
<keyword id="KW-0002">3D-structure</keyword>
<keyword id="KW-0007">Acetylation</keyword>
<keyword id="KW-0067">ATP-binding</keyword>
<keyword id="KW-0112">Calmodulin-binding</keyword>
<keyword id="KW-0122">Cardiomyopathy</keyword>
<keyword id="KW-0963">Cytoplasm</keyword>
<keyword id="KW-0225">Disease variant</keyword>
<keyword id="KW-0418">Kinase</keyword>
<keyword id="KW-0547">Nucleotide-binding</keyword>
<keyword id="KW-0597">Phosphoprotein</keyword>
<keyword id="KW-1267">Proteomics identification</keyword>
<keyword id="KW-1185">Reference proteome</keyword>
<keyword id="KW-0723">Serine/threonine-protein kinase</keyword>
<keyword id="KW-0808">Transferase</keyword>
<feature type="initiator methionine" description="Removed" evidence="2">
    <location>
        <position position="1"/>
    </location>
</feature>
<feature type="chain" id="PRO_0000086408" description="Myosin light chain kinase 2, skeletal/cardiac muscle">
    <location>
        <begin position="2"/>
        <end position="596"/>
    </location>
</feature>
<feature type="domain" description="Protein kinase" evidence="5">
    <location>
        <begin position="285"/>
        <end position="540"/>
    </location>
</feature>
<feature type="region of interest" description="Disordered" evidence="7">
    <location>
        <begin position="1"/>
        <end position="224"/>
    </location>
</feature>
<feature type="region of interest" description="Calmodulin-binding" evidence="1">
    <location>
        <begin position="574"/>
        <end position="586"/>
    </location>
</feature>
<feature type="compositionally biased region" description="Basic and acidic residues" evidence="7">
    <location>
        <begin position="40"/>
        <end position="63"/>
    </location>
</feature>
<feature type="compositionally biased region" description="Low complexity" evidence="7">
    <location>
        <begin position="88"/>
        <end position="104"/>
    </location>
</feature>
<feature type="compositionally biased region" description="Basic and acidic residues" evidence="7">
    <location>
        <begin position="189"/>
        <end position="209"/>
    </location>
</feature>
<feature type="active site" description="Proton acceptor" evidence="5 6">
    <location>
        <position position="406"/>
    </location>
</feature>
<feature type="binding site" evidence="5">
    <location>
        <begin position="291"/>
        <end position="299"/>
    </location>
    <ligand>
        <name>ATP</name>
        <dbReference type="ChEBI" id="CHEBI:30616"/>
    </ligand>
</feature>
<feature type="binding site" evidence="5">
    <location>
        <position position="314"/>
    </location>
    <ligand>
        <name>ATP</name>
        <dbReference type="ChEBI" id="CHEBI:30616"/>
    </ligand>
</feature>
<feature type="modified residue" description="N-acetylalanine" evidence="2">
    <location>
        <position position="2"/>
    </location>
</feature>
<feature type="modified residue" description="Phosphoserine" evidence="4">
    <location>
        <position position="143"/>
    </location>
</feature>
<feature type="modified residue" description="Phosphoserine" evidence="4">
    <location>
        <position position="149"/>
    </location>
</feature>
<feature type="modified residue" description="Phosphoserine" evidence="4">
    <location>
        <position position="151"/>
    </location>
</feature>
<feature type="modified residue" description="Phosphothreonine" evidence="3">
    <location>
        <position position="445"/>
    </location>
</feature>
<feature type="sequence variant" id="VAR_014197" description="In CMH; dbSNP:rs121908107." evidence="8">
    <original>A</original>
    <variation>V</variation>
    <location>
        <position position="87"/>
    </location>
</feature>
<feature type="sequence variant" id="VAR_014198" description="In CMH; dbSNP:rs121908108." evidence="8">
    <original>A</original>
    <variation>E</variation>
    <location>
        <position position="95"/>
    </location>
</feature>
<feature type="sequence variant" id="VAR_040860" description="In a lung neuroendocrine carcinoma sample; somatic mutation; dbSNP:rs1229709568." evidence="9">
    <original>A</original>
    <variation>V</variation>
    <location>
        <position position="117"/>
    </location>
</feature>
<feature type="sequence variant" id="VAR_040861" description="In dbSNP:rs56385445." evidence="9">
    <original>G</original>
    <variation>V</variation>
    <location>
        <position position="142"/>
    </location>
</feature>
<feature type="sequence variant" id="VAR_040862" description="In dbSNP:rs34396614." evidence="9">
    <original>P</original>
    <variation>A</variation>
    <location>
        <position position="144"/>
    </location>
</feature>
<feature type="sequence variant" id="VAR_040863" description="In dbSNP:rs34146416." evidence="9">
    <original>K</original>
    <variation>N</variation>
    <location>
        <position position="324"/>
    </location>
</feature>
<feature type="sequence conflict" description="In Ref. 4; AAH07753." evidence="11" ref="4">
    <original>IVLFMEY</original>
    <variation>GGVCAHS</variation>
    <location>
        <begin position="355"/>
        <end position="361"/>
    </location>
</feature>
<feature type="helix" evidence="12">
    <location>
        <begin position="567"/>
        <end position="586"/>
    </location>
</feature>